<proteinExistence type="inferred from homology"/>
<comment type="function">
    <text evidence="1">Could catalyze the transfer of an acetyl group from acetyl coenzyme A (AcCoA) to an acceptor substrate and release both CoA and the acetylated product.</text>
</comment>
<comment type="similarity">
    <text evidence="4">Belongs to the UPF0039 (ElaA) family.</text>
</comment>
<organism>
    <name type="scientific">Staphylococcus aureus (strain MW2)</name>
    <dbReference type="NCBI Taxonomy" id="196620"/>
    <lineage>
        <taxon>Bacteria</taxon>
        <taxon>Bacillati</taxon>
        <taxon>Bacillota</taxon>
        <taxon>Bacilli</taxon>
        <taxon>Bacillales</taxon>
        <taxon>Staphylococcaceae</taxon>
        <taxon>Staphylococcus</taxon>
    </lineage>
</organism>
<feature type="chain" id="PRO_0000201928" description="Putative acetyltransferase MW0937">
    <location>
        <begin position="1"/>
        <end position="144"/>
    </location>
</feature>
<feature type="domain" description="N-acetyltransferase" evidence="3">
    <location>
        <begin position="1"/>
        <end position="141"/>
    </location>
</feature>
<feature type="binding site" evidence="2">
    <location>
        <begin position="71"/>
        <end position="73"/>
    </location>
    <ligand>
        <name>CoA</name>
        <dbReference type="ChEBI" id="CHEBI:57287"/>
    </ligand>
</feature>
<feature type="binding site" evidence="2">
    <location>
        <position position="79"/>
    </location>
    <ligand>
        <name>CoA</name>
        <dbReference type="ChEBI" id="CHEBI:57287"/>
    </ligand>
</feature>
<feature type="binding site" evidence="2">
    <location>
        <begin position="112"/>
        <end position="114"/>
    </location>
    <ligand>
        <name>CoA</name>
        <dbReference type="ChEBI" id="CHEBI:57287"/>
    </ligand>
</feature>
<accession>P0A0M8</accession>
<accession>P52080</accession>
<keyword id="KW-0012">Acyltransferase</keyword>
<keyword id="KW-0808">Transferase</keyword>
<gene>
    <name type="ordered locus">MW0937</name>
</gene>
<sequence>MFSKVNNQKMLEDCFYIRKKVFVEEQGVPEESEIDEYESESIHLIGYDNGQPVATARIRPINETTVKIERVAVMKSHRGQGMGRMLMQAVESLAKDEGFYVATMNAQCHAIPFYESLNFKMRGNIFLEEGIEHIEMTKKLTSLN</sequence>
<dbReference type="EC" id="2.3.1.-"/>
<dbReference type="EMBL" id="BA000033">
    <property type="protein sequence ID" value="BAB94802.1"/>
    <property type="molecule type" value="Genomic_DNA"/>
</dbReference>
<dbReference type="RefSeq" id="WP_000491986.1">
    <property type="nucleotide sequence ID" value="NC_003923.1"/>
</dbReference>
<dbReference type="SMR" id="P0A0M8"/>
<dbReference type="KEGG" id="sam:MW0937"/>
<dbReference type="HOGENOM" id="CLU_056607_6_2_9"/>
<dbReference type="GO" id="GO:0016747">
    <property type="term" value="F:acyltransferase activity, transferring groups other than amino-acyl groups"/>
    <property type="evidence" value="ECO:0000250"/>
    <property type="project" value="UniProtKB"/>
</dbReference>
<dbReference type="GO" id="GO:0004343">
    <property type="term" value="F:glucosamine 6-phosphate N-acetyltransferase activity"/>
    <property type="evidence" value="ECO:0007669"/>
    <property type="project" value="TreeGrafter"/>
</dbReference>
<dbReference type="CDD" id="cd04301">
    <property type="entry name" value="NAT_SF"/>
    <property type="match status" value="1"/>
</dbReference>
<dbReference type="FunFam" id="3.40.630.30:FF:000131">
    <property type="entry name" value="Acetyltransferase, GNAT family"/>
    <property type="match status" value="1"/>
</dbReference>
<dbReference type="Gene3D" id="3.40.630.30">
    <property type="match status" value="1"/>
</dbReference>
<dbReference type="InterPro" id="IPR016181">
    <property type="entry name" value="Acyl_CoA_acyltransferase"/>
</dbReference>
<dbReference type="InterPro" id="IPR000182">
    <property type="entry name" value="GNAT_dom"/>
</dbReference>
<dbReference type="InterPro" id="IPR039143">
    <property type="entry name" value="GNPNAT1-like"/>
</dbReference>
<dbReference type="PANTHER" id="PTHR13355">
    <property type="entry name" value="GLUCOSAMINE 6-PHOSPHATE N-ACETYLTRANSFERASE"/>
    <property type="match status" value="1"/>
</dbReference>
<dbReference type="PANTHER" id="PTHR13355:SF11">
    <property type="entry name" value="GLUCOSAMINE 6-PHOSPHATE N-ACETYLTRANSFERASE"/>
    <property type="match status" value="1"/>
</dbReference>
<dbReference type="Pfam" id="PF00583">
    <property type="entry name" value="Acetyltransf_1"/>
    <property type="match status" value="1"/>
</dbReference>
<dbReference type="SUPFAM" id="SSF55729">
    <property type="entry name" value="Acyl-CoA N-acyltransferases (Nat)"/>
    <property type="match status" value="1"/>
</dbReference>
<dbReference type="PROSITE" id="PS51186">
    <property type="entry name" value="GNAT"/>
    <property type="match status" value="1"/>
</dbReference>
<evidence type="ECO:0000250" key="1">
    <source>
        <dbReference type="UniProtKB" id="Q5HH30"/>
    </source>
</evidence>
<evidence type="ECO:0000250" key="2">
    <source>
        <dbReference type="UniProtKB" id="Q9I0Q8"/>
    </source>
</evidence>
<evidence type="ECO:0000255" key="3">
    <source>
        <dbReference type="PROSITE-ProRule" id="PRU00532"/>
    </source>
</evidence>
<evidence type="ECO:0000305" key="4"/>
<name>ATSE_STAAW</name>
<protein>
    <recommendedName>
        <fullName evidence="1">Putative acetyltransferase MW0937</fullName>
        <ecNumber>2.3.1.-</ecNumber>
    </recommendedName>
    <alternativeName>
        <fullName evidence="1">GCN5-related N-acetyltransferase</fullName>
        <shortName evidence="1">GNAT</shortName>
    </alternativeName>
</protein>
<reference key="1">
    <citation type="journal article" date="2002" name="Lancet">
        <title>Genome and virulence determinants of high virulence community-acquired MRSA.</title>
        <authorList>
            <person name="Baba T."/>
            <person name="Takeuchi F."/>
            <person name="Kuroda M."/>
            <person name="Yuzawa H."/>
            <person name="Aoki K."/>
            <person name="Oguchi A."/>
            <person name="Nagai Y."/>
            <person name="Iwama N."/>
            <person name="Asano K."/>
            <person name="Naimi T."/>
            <person name="Kuroda H."/>
            <person name="Cui L."/>
            <person name="Yamamoto K."/>
            <person name="Hiramatsu K."/>
        </authorList>
    </citation>
    <scope>NUCLEOTIDE SEQUENCE [LARGE SCALE GENOMIC DNA]</scope>
    <source>
        <strain>MW2</strain>
    </source>
</reference>